<comment type="catalytic activity">
    <reaction evidence="1">
        <text>N-(5-phospho-beta-D-ribosyl)anthranilate = 1-(2-carboxyphenylamino)-1-deoxy-D-ribulose 5-phosphate</text>
        <dbReference type="Rhea" id="RHEA:21540"/>
        <dbReference type="ChEBI" id="CHEBI:18277"/>
        <dbReference type="ChEBI" id="CHEBI:58613"/>
        <dbReference type="EC" id="5.3.1.24"/>
    </reaction>
</comment>
<comment type="pathway">
    <text evidence="1">Amino-acid biosynthesis; L-tryptophan biosynthesis; L-tryptophan from chorismate: step 3/5.</text>
</comment>
<comment type="similarity">
    <text evidence="1">Belongs to the TrpF family.</text>
</comment>
<reference key="1">
    <citation type="submission" date="2007-06" db="EMBL/GenBank/DDBJ databases">
        <title>Complete sequence of Methanococcus vannielii SB.</title>
        <authorList>
            <consortium name="US DOE Joint Genome Institute"/>
            <person name="Copeland A."/>
            <person name="Lucas S."/>
            <person name="Lapidus A."/>
            <person name="Barry K."/>
            <person name="Glavina del Rio T."/>
            <person name="Dalin E."/>
            <person name="Tice H."/>
            <person name="Pitluck S."/>
            <person name="Chain P."/>
            <person name="Malfatti S."/>
            <person name="Shin M."/>
            <person name="Vergez L."/>
            <person name="Schmutz J."/>
            <person name="Larimer F."/>
            <person name="Land M."/>
            <person name="Hauser L."/>
            <person name="Kyrpides N."/>
            <person name="Anderson I."/>
            <person name="Sieprawska-Lupa M."/>
            <person name="Whitman W.B."/>
            <person name="Richardson P."/>
        </authorList>
    </citation>
    <scope>NUCLEOTIDE SEQUENCE [LARGE SCALE GENOMIC DNA]</scope>
    <source>
        <strain>ATCC 35089 / DSM 1224 / JCM 13029 / OCM 148 / SB</strain>
    </source>
</reference>
<protein>
    <recommendedName>
        <fullName evidence="1">N-(5'-phosphoribosyl)anthranilate isomerase</fullName>
        <shortName evidence="1">PRAI</shortName>
        <ecNumber evidence="1">5.3.1.24</ecNumber>
    </recommendedName>
</protein>
<proteinExistence type="inferred from homology"/>
<gene>
    <name evidence="1" type="primary">trpF</name>
    <name type="ordered locus">Mevan_0329</name>
</gene>
<dbReference type="EC" id="5.3.1.24" evidence="1"/>
<dbReference type="EMBL" id="CP000742">
    <property type="protein sequence ID" value="ABR54238.1"/>
    <property type="molecule type" value="Genomic_DNA"/>
</dbReference>
<dbReference type="RefSeq" id="WP_011972141.1">
    <property type="nucleotide sequence ID" value="NC_009634.1"/>
</dbReference>
<dbReference type="SMR" id="A6UP16"/>
<dbReference type="STRING" id="406327.Mevan_0329"/>
<dbReference type="GeneID" id="5325930"/>
<dbReference type="KEGG" id="mvn:Mevan_0329"/>
<dbReference type="eggNOG" id="arCOG01983">
    <property type="taxonomic scope" value="Archaea"/>
</dbReference>
<dbReference type="HOGENOM" id="CLU_076364_2_1_2"/>
<dbReference type="OrthoDB" id="27513at2157"/>
<dbReference type="UniPathway" id="UPA00035">
    <property type="reaction ID" value="UER00042"/>
</dbReference>
<dbReference type="Proteomes" id="UP000001107">
    <property type="component" value="Chromosome"/>
</dbReference>
<dbReference type="GO" id="GO:0004640">
    <property type="term" value="F:phosphoribosylanthranilate isomerase activity"/>
    <property type="evidence" value="ECO:0007669"/>
    <property type="project" value="UniProtKB-UniRule"/>
</dbReference>
<dbReference type="GO" id="GO:0000162">
    <property type="term" value="P:L-tryptophan biosynthetic process"/>
    <property type="evidence" value="ECO:0007669"/>
    <property type="project" value="UniProtKB-UniRule"/>
</dbReference>
<dbReference type="CDD" id="cd00405">
    <property type="entry name" value="PRAI"/>
    <property type="match status" value="1"/>
</dbReference>
<dbReference type="Gene3D" id="3.20.20.70">
    <property type="entry name" value="Aldolase class I"/>
    <property type="match status" value="1"/>
</dbReference>
<dbReference type="HAMAP" id="MF_00135">
    <property type="entry name" value="PRAI"/>
    <property type="match status" value="1"/>
</dbReference>
<dbReference type="InterPro" id="IPR013785">
    <property type="entry name" value="Aldolase_TIM"/>
</dbReference>
<dbReference type="InterPro" id="IPR001240">
    <property type="entry name" value="PRAI_dom"/>
</dbReference>
<dbReference type="InterPro" id="IPR011060">
    <property type="entry name" value="RibuloseP-bd_barrel"/>
</dbReference>
<dbReference type="InterPro" id="IPR044643">
    <property type="entry name" value="TrpF_fam"/>
</dbReference>
<dbReference type="NCBIfam" id="NF002304">
    <property type="entry name" value="PRK01222.2-4"/>
    <property type="match status" value="1"/>
</dbReference>
<dbReference type="PANTHER" id="PTHR42894">
    <property type="entry name" value="N-(5'-PHOSPHORIBOSYL)ANTHRANILATE ISOMERASE"/>
    <property type="match status" value="1"/>
</dbReference>
<dbReference type="PANTHER" id="PTHR42894:SF1">
    <property type="entry name" value="N-(5'-PHOSPHORIBOSYL)ANTHRANILATE ISOMERASE"/>
    <property type="match status" value="1"/>
</dbReference>
<dbReference type="Pfam" id="PF00697">
    <property type="entry name" value="PRAI"/>
    <property type="match status" value="1"/>
</dbReference>
<dbReference type="SUPFAM" id="SSF51366">
    <property type="entry name" value="Ribulose-phoshate binding barrel"/>
    <property type="match status" value="1"/>
</dbReference>
<accession>A6UP16</accession>
<name>TRPF_METVS</name>
<evidence type="ECO:0000255" key="1">
    <source>
        <dbReference type="HAMAP-Rule" id="MF_00135"/>
    </source>
</evidence>
<feature type="chain" id="PRO_1000057880" description="N-(5'-phosphoribosyl)anthranilate isomerase">
    <location>
        <begin position="1"/>
        <end position="208"/>
    </location>
</feature>
<sequence>MFIKICGIKTPNELKIIEKYGDFTGVILECVSKRKIGVESAKNLIEISNIPVFAVSTTTEVLAWKNIIELTGTNYLQMHSNIDSKSVEAIKKEYGCFIMKSFKIPEKSEFPEIDAENIILDIERYEVDRILLDTGKGCGMVHDHRISQIIAKKFDIVLAGGLNTDNVSEIIKKVKPFGVDVSSGVENKNSKDEGLIKKFYENVKSVKL</sequence>
<keyword id="KW-0028">Amino-acid biosynthesis</keyword>
<keyword id="KW-0057">Aromatic amino acid biosynthesis</keyword>
<keyword id="KW-0413">Isomerase</keyword>
<keyword id="KW-0822">Tryptophan biosynthesis</keyword>
<organism>
    <name type="scientific">Methanococcus vannielii (strain ATCC 35089 / DSM 1224 / JCM 13029 / OCM 148 / SB)</name>
    <dbReference type="NCBI Taxonomy" id="406327"/>
    <lineage>
        <taxon>Archaea</taxon>
        <taxon>Methanobacteriati</taxon>
        <taxon>Methanobacteriota</taxon>
        <taxon>Methanomada group</taxon>
        <taxon>Methanococci</taxon>
        <taxon>Methanococcales</taxon>
        <taxon>Methanococcaceae</taxon>
        <taxon>Methanococcus</taxon>
    </lineage>
</organism>